<proteinExistence type="inferred from homology"/>
<protein>
    <recommendedName>
        <fullName evidence="1">Dephospho-CoA kinase</fullName>
        <ecNumber evidence="1">2.7.1.24</ecNumber>
    </recommendedName>
    <alternativeName>
        <fullName evidence="1">Dephosphocoenzyme A kinase</fullName>
    </alternativeName>
</protein>
<name>COAE_LATSS</name>
<dbReference type="EC" id="2.7.1.24" evidence="1"/>
<dbReference type="EMBL" id="CR936503">
    <property type="protein sequence ID" value="CAI55707.1"/>
    <property type="molecule type" value="Genomic_DNA"/>
</dbReference>
<dbReference type="RefSeq" id="WP_011375097.1">
    <property type="nucleotide sequence ID" value="NC_007576.1"/>
</dbReference>
<dbReference type="SMR" id="Q38VS6"/>
<dbReference type="STRING" id="314315.LCA_1404"/>
<dbReference type="KEGG" id="lsa:LCA_1404"/>
<dbReference type="eggNOG" id="COG0237">
    <property type="taxonomic scope" value="Bacteria"/>
</dbReference>
<dbReference type="HOGENOM" id="CLU_057180_0_0_9"/>
<dbReference type="OrthoDB" id="9812943at2"/>
<dbReference type="UniPathway" id="UPA00241">
    <property type="reaction ID" value="UER00356"/>
</dbReference>
<dbReference type="Proteomes" id="UP000002707">
    <property type="component" value="Chromosome"/>
</dbReference>
<dbReference type="GO" id="GO:0005737">
    <property type="term" value="C:cytoplasm"/>
    <property type="evidence" value="ECO:0007669"/>
    <property type="project" value="UniProtKB-SubCell"/>
</dbReference>
<dbReference type="GO" id="GO:0005524">
    <property type="term" value="F:ATP binding"/>
    <property type="evidence" value="ECO:0007669"/>
    <property type="project" value="UniProtKB-UniRule"/>
</dbReference>
<dbReference type="GO" id="GO:0004140">
    <property type="term" value="F:dephospho-CoA kinase activity"/>
    <property type="evidence" value="ECO:0007669"/>
    <property type="project" value="UniProtKB-UniRule"/>
</dbReference>
<dbReference type="GO" id="GO:0015937">
    <property type="term" value="P:coenzyme A biosynthetic process"/>
    <property type="evidence" value="ECO:0007669"/>
    <property type="project" value="UniProtKB-UniRule"/>
</dbReference>
<dbReference type="CDD" id="cd02022">
    <property type="entry name" value="DPCK"/>
    <property type="match status" value="1"/>
</dbReference>
<dbReference type="FunFam" id="3.40.50.300:FF:000991">
    <property type="entry name" value="Dephospho-CoA kinase"/>
    <property type="match status" value="1"/>
</dbReference>
<dbReference type="Gene3D" id="3.40.50.300">
    <property type="entry name" value="P-loop containing nucleotide triphosphate hydrolases"/>
    <property type="match status" value="1"/>
</dbReference>
<dbReference type="HAMAP" id="MF_00376">
    <property type="entry name" value="Dephospho_CoA_kinase"/>
    <property type="match status" value="1"/>
</dbReference>
<dbReference type="InterPro" id="IPR001977">
    <property type="entry name" value="Depp_CoAkinase"/>
</dbReference>
<dbReference type="InterPro" id="IPR027417">
    <property type="entry name" value="P-loop_NTPase"/>
</dbReference>
<dbReference type="NCBIfam" id="TIGR00152">
    <property type="entry name" value="dephospho-CoA kinase"/>
    <property type="match status" value="1"/>
</dbReference>
<dbReference type="PANTHER" id="PTHR10695:SF46">
    <property type="entry name" value="BIFUNCTIONAL COENZYME A SYNTHASE-RELATED"/>
    <property type="match status" value="1"/>
</dbReference>
<dbReference type="PANTHER" id="PTHR10695">
    <property type="entry name" value="DEPHOSPHO-COA KINASE-RELATED"/>
    <property type="match status" value="1"/>
</dbReference>
<dbReference type="Pfam" id="PF01121">
    <property type="entry name" value="CoaE"/>
    <property type="match status" value="1"/>
</dbReference>
<dbReference type="SUPFAM" id="SSF52540">
    <property type="entry name" value="P-loop containing nucleoside triphosphate hydrolases"/>
    <property type="match status" value="1"/>
</dbReference>
<dbReference type="PROSITE" id="PS51219">
    <property type="entry name" value="DPCK"/>
    <property type="match status" value="1"/>
</dbReference>
<sequence>MTYFLGLTGGIATGKTTVSQMLAQQGIPIIDGDQVAHQVLANNQSVQAQIQATFGKQLVQDGQVDRAALGKLVFGNQAALAQLNAITAPVIRETIMTEMVQAKAHQVPLVVLDLPLLYEQHYETVCDGVLVVYLPVEKQLARLMARNQLSREDALKRINSQASLAEKRDRADFVIDNQGSLDQLKAQLKTVLEGVCHKSGMS</sequence>
<reference key="1">
    <citation type="journal article" date="2005" name="Nat. Biotechnol.">
        <title>The complete genome sequence of the meat-borne lactic acid bacterium Lactobacillus sakei 23K.</title>
        <authorList>
            <person name="Chaillou S."/>
            <person name="Champomier-Verges M.-C."/>
            <person name="Cornet M."/>
            <person name="Crutz-Le Coq A.-M."/>
            <person name="Dudez A.-M."/>
            <person name="Martin V."/>
            <person name="Beaufils S."/>
            <person name="Darbon-Rongere E."/>
            <person name="Bossy R."/>
            <person name="Loux V."/>
            <person name="Zagorec M."/>
        </authorList>
    </citation>
    <scope>NUCLEOTIDE SEQUENCE [LARGE SCALE GENOMIC DNA]</scope>
    <source>
        <strain>23K</strain>
    </source>
</reference>
<keyword id="KW-0067">ATP-binding</keyword>
<keyword id="KW-0173">Coenzyme A biosynthesis</keyword>
<keyword id="KW-0963">Cytoplasm</keyword>
<keyword id="KW-0418">Kinase</keyword>
<keyword id="KW-0547">Nucleotide-binding</keyword>
<keyword id="KW-1185">Reference proteome</keyword>
<keyword id="KW-0808">Transferase</keyword>
<organism>
    <name type="scientific">Latilactobacillus sakei subsp. sakei (strain 23K)</name>
    <name type="common">Lactobacillus sakei subsp. sakei</name>
    <dbReference type="NCBI Taxonomy" id="314315"/>
    <lineage>
        <taxon>Bacteria</taxon>
        <taxon>Bacillati</taxon>
        <taxon>Bacillota</taxon>
        <taxon>Bacilli</taxon>
        <taxon>Lactobacillales</taxon>
        <taxon>Lactobacillaceae</taxon>
        <taxon>Latilactobacillus</taxon>
    </lineage>
</organism>
<feature type="chain" id="PRO_0000243299" description="Dephospho-CoA kinase">
    <location>
        <begin position="1"/>
        <end position="202"/>
    </location>
</feature>
<feature type="domain" description="DPCK" evidence="1">
    <location>
        <begin position="4"/>
        <end position="202"/>
    </location>
</feature>
<feature type="binding site" evidence="1">
    <location>
        <begin position="12"/>
        <end position="17"/>
    </location>
    <ligand>
        <name>ATP</name>
        <dbReference type="ChEBI" id="CHEBI:30616"/>
    </ligand>
</feature>
<accession>Q38VS6</accession>
<gene>
    <name evidence="1" type="primary">coaE</name>
    <name type="ordered locus">LCA_1404</name>
</gene>
<comment type="function">
    <text evidence="1">Catalyzes the phosphorylation of the 3'-hydroxyl group of dephosphocoenzyme A to form coenzyme A.</text>
</comment>
<comment type="catalytic activity">
    <reaction evidence="1">
        <text>3'-dephospho-CoA + ATP = ADP + CoA + H(+)</text>
        <dbReference type="Rhea" id="RHEA:18245"/>
        <dbReference type="ChEBI" id="CHEBI:15378"/>
        <dbReference type="ChEBI" id="CHEBI:30616"/>
        <dbReference type="ChEBI" id="CHEBI:57287"/>
        <dbReference type="ChEBI" id="CHEBI:57328"/>
        <dbReference type="ChEBI" id="CHEBI:456216"/>
        <dbReference type="EC" id="2.7.1.24"/>
    </reaction>
</comment>
<comment type="pathway">
    <text evidence="1">Cofactor biosynthesis; coenzyme A biosynthesis; CoA from (R)-pantothenate: step 5/5.</text>
</comment>
<comment type="subcellular location">
    <subcellularLocation>
        <location evidence="1">Cytoplasm</location>
    </subcellularLocation>
</comment>
<comment type="similarity">
    <text evidence="1">Belongs to the CoaE family.</text>
</comment>
<evidence type="ECO:0000255" key="1">
    <source>
        <dbReference type="HAMAP-Rule" id="MF_00376"/>
    </source>
</evidence>